<proteinExistence type="inferred from homology"/>
<gene>
    <name evidence="1" type="primary">rlmH</name>
    <name type="ordered locus">CHY_0058</name>
</gene>
<evidence type="ECO:0000255" key="1">
    <source>
        <dbReference type="HAMAP-Rule" id="MF_00658"/>
    </source>
</evidence>
<sequence>MEITIVAVGKIKERYLKEGIAEYLKRLSPYARLAVIEVDDENAPENLSPAEAEKVVKKEGERILAKITPSSFVIALDLKGKNLSSEEFAHFISEKNLYGQSKLTFIIGGSLGLSREVLERADFKLSFGRMTYPHQLMRLILLEQIYRAFKIIRGEPYHK</sequence>
<organism>
    <name type="scientific">Carboxydothermus hydrogenoformans (strain ATCC BAA-161 / DSM 6008 / Z-2901)</name>
    <dbReference type="NCBI Taxonomy" id="246194"/>
    <lineage>
        <taxon>Bacteria</taxon>
        <taxon>Bacillati</taxon>
        <taxon>Bacillota</taxon>
        <taxon>Clostridia</taxon>
        <taxon>Thermoanaerobacterales</taxon>
        <taxon>Thermoanaerobacteraceae</taxon>
        <taxon>Carboxydothermus</taxon>
    </lineage>
</organism>
<accession>Q3AG04</accession>
<feature type="chain" id="PRO_0000260543" description="Ribosomal RNA large subunit methyltransferase H">
    <location>
        <begin position="1"/>
        <end position="159"/>
    </location>
</feature>
<feature type="binding site" evidence="1">
    <location>
        <position position="76"/>
    </location>
    <ligand>
        <name>S-adenosyl-L-methionine</name>
        <dbReference type="ChEBI" id="CHEBI:59789"/>
    </ligand>
</feature>
<feature type="binding site" evidence="1">
    <location>
        <position position="108"/>
    </location>
    <ligand>
        <name>S-adenosyl-L-methionine</name>
        <dbReference type="ChEBI" id="CHEBI:59789"/>
    </ligand>
</feature>
<feature type="binding site" evidence="1">
    <location>
        <begin position="127"/>
        <end position="132"/>
    </location>
    <ligand>
        <name>S-adenosyl-L-methionine</name>
        <dbReference type="ChEBI" id="CHEBI:59789"/>
    </ligand>
</feature>
<protein>
    <recommendedName>
        <fullName evidence="1">Ribosomal RNA large subunit methyltransferase H</fullName>
        <ecNumber evidence="1">2.1.1.177</ecNumber>
    </recommendedName>
    <alternativeName>
        <fullName evidence="1">23S rRNA (pseudouridine1915-N3)-methyltransferase</fullName>
    </alternativeName>
    <alternativeName>
        <fullName evidence="1">23S rRNA m3Psi1915 methyltransferase</fullName>
    </alternativeName>
    <alternativeName>
        <fullName evidence="1">rRNA (pseudouridine-N3-)-methyltransferase RlmH</fullName>
    </alternativeName>
</protein>
<reference key="1">
    <citation type="journal article" date="2005" name="PLoS Genet.">
        <title>Life in hot carbon monoxide: the complete genome sequence of Carboxydothermus hydrogenoformans Z-2901.</title>
        <authorList>
            <person name="Wu M."/>
            <person name="Ren Q."/>
            <person name="Durkin A.S."/>
            <person name="Daugherty S.C."/>
            <person name="Brinkac L.M."/>
            <person name="Dodson R.J."/>
            <person name="Madupu R."/>
            <person name="Sullivan S.A."/>
            <person name="Kolonay J.F."/>
            <person name="Nelson W.C."/>
            <person name="Tallon L.J."/>
            <person name="Jones K.M."/>
            <person name="Ulrich L.E."/>
            <person name="Gonzalez J.M."/>
            <person name="Zhulin I.B."/>
            <person name="Robb F.T."/>
            <person name="Eisen J.A."/>
        </authorList>
    </citation>
    <scope>NUCLEOTIDE SEQUENCE [LARGE SCALE GENOMIC DNA]</scope>
    <source>
        <strain>ATCC BAA-161 / DSM 6008 / Z-2901</strain>
    </source>
</reference>
<dbReference type="EC" id="2.1.1.177" evidence="1"/>
<dbReference type="EMBL" id="CP000141">
    <property type="protein sequence ID" value="ABB16172.1"/>
    <property type="molecule type" value="Genomic_DNA"/>
</dbReference>
<dbReference type="RefSeq" id="WP_011343006.1">
    <property type="nucleotide sequence ID" value="NC_007503.1"/>
</dbReference>
<dbReference type="SMR" id="Q3AG04"/>
<dbReference type="FunCoup" id="Q3AG04">
    <property type="interactions" value="173"/>
</dbReference>
<dbReference type="STRING" id="246194.CHY_0058"/>
<dbReference type="KEGG" id="chy:CHY_0058"/>
<dbReference type="eggNOG" id="COG1576">
    <property type="taxonomic scope" value="Bacteria"/>
</dbReference>
<dbReference type="HOGENOM" id="CLU_100552_0_0_9"/>
<dbReference type="InParanoid" id="Q3AG04"/>
<dbReference type="OrthoDB" id="9806643at2"/>
<dbReference type="Proteomes" id="UP000002706">
    <property type="component" value="Chromosome"/>
</dbReference>
<dbReference type="GO" id="GO:0005737">
    <property type="term" value="C:cytoplasm"/>
    <property type="evidence" value="ECO:0007669"/>
    <property type="project" value="UniProtKB-SubCell"/>
</dbReference>
<dbReference type="GO" id="GO:0070038">
    <property type="term" value="F:rRNA (pseudouridine-N3-)-methyltransferase activity"/>
    <property type="evidence" value="ECO:0007669"/>
    <property type="project" value="UniProtKB-UniRule"/>
</dbReference>
<dbReference type="CDD" id="cd18081">
    <property type="entry name" value="RlmH-like"/>
    <property type="match status" value="1"/>
</dbReference>
<dbReference type="Gene3D" id="3.40.1280.10">
    <property type="match status" value="1"/>
</dbReference>
<dbReference type="HAMAP" id="MF_00658">
    <property type="entry name" value="23SrRNA_methyltr_H"/>
    <property type="match status" value="1"/>
</dbReference>
<dbReference type="InterPro" id="IPR029028">
    <property type="entry name" value="Alpha/beta_knot_MTases"/>
</dbReference>
<dbReference type="InterPro" id="IPR003742">
    <property type="entry name" value="RlmH-like"/>
</dbReference>
<dbReference type="InterPro" id="IPR029026">
    <property type="entry name" value="tRNA_m1G_MTases_N"/>
</dbReference>
<dbReference type="NCBIfam" id="NF000985">
    <property type="entry name" value="PRK00103.1-3"/>
    <property type="match status" value="1"/>
</dbReference>
<dbReference type="NCBIfam" id="TIGR00246">
    <property type="entry name" value="tRNA_RlmH_YbeA"/>
    <property type="match status" value="1"/>
</dbReference>
<dbReference type="PANTHER" id="PTHR33603">
    <property type="entry name" value="METHYLTRANSFERASE"/>
    <property type="match status" value="1"/>
</dbReference>
<dbReference type="PANTHER" id="PTHR33603:SF1">
    <property type="entry name" value="RIBOSOMAL RNA LARGE SUBUNIT METHYLTRANSFERASE H"/>
    <property type="match status" value="1"/>
</dbReference>
<dbReference type="Pfam" id="PF02590">
    <property type="entry name" value="SPOUT_MTase"/>
    <property type="match status" value="1"/>
</dbReference>
<dbReference type="PIRSF" id="PIRSF004505">
    <property type="entry name" value="MT_bac"/>
    <property type="match status" value="1"/>
</dbReference>
<dbReference type="SUPFAM" id="SSF75217">
    <property type="entry name" value="alpha/beta knot"/>
    <property type="match status" value="1"/>
</dbReference>
<name>RLMH_CARHZ</name>
<comment type="function">
    <text evidence="1">Specifically methylates the pseudouridine at position 1915 (m3Psi1915) in 23S rRNA.</text>
</comment>
<comment type="catalytic activity">
    <reaction evidence="1">
        <text>pseudouridine(1915) in 23S rRNA + S-adenosyl-L-methionine = N(3)-methylpseudouridine(1915) in 23S rRNA + S-adenosyl-L-homocysteine + H(+)</text>
        <dbReference type="Rhea" id="RHEA:42752"/>
        <dbReference type="Rhea" id="RHEA-COMP:10221"/>
        <dbReference type="Rhea" id="RHEA-COMP:10222"/>
        <dbReference type="ChEBI" id="CHEBI:15378"/>
        <dbReference type="ChEBI" id="CHEBI:57856"/>
        <dbReference type="ChEBI" id="CHEBI:59789"/>
        <dbReference type="ChEBI" id="CHEBI:65314"/>
        <dbReference type="ChEBI" id="CHEBI:74486"/>
        <dbReference type="EC" id="2.1.1.177"/>
    </reaction>
</comment>
<comment type="subunit">
    <text evidence="1">Homodimer.</text>
</comment>
<comment type="subcellular location">
    <subcellularLocation>
        <location evidence="1">Cytoplasm</location>
    </subcellularLocation>
</comment>
<comment type="similarity">
    <text evidence="1">Belongs to the RNA methyltransferase RlmH family.</text>
</comment>
<keyword id="KW-0963">Cytoplasm</keyword>
<keyword id="KW-0489">Methyltransferase</keyword>
<keyword id="KW-1185">Reference proteome</keyword>
<keyword id="KW-0698">rRNA processing</keyword>
<keyword id="KW-0949">S-adenosyl-L-methionine</keyword>
<keyword id="KW-0808">Transferase</keyword>